<sequence>MGQEGMGYNNGKGGGGGGGGLPMTAPRPRGASPLSSHGHHHRSRKIHRTFNNVKITVLCGLVTILVLRGTIGLNLSLPNQPTDADALAGAKAVEDIDRILREIRSDGGADDDAAAAGDLAGSFNATALNATEAAAAYASAVERYALGPKISDWDGQRRRWLRQNPGFPSTVAGGKPRILLVTGSQPGPCDNPLGDHYLLKTTKNKIDYCRLHGIEIVHNLAHLDTELAGYWAKLPLLRRLMLSHPEVEWIWWMDSDALFTDMAFELPLSRYQDRNLIIHGYQDLLFEKHSWIALNTGSFLFRNCQWSLDLLDAWAPMGPKGFIRDEAGKILTANLKGRPAFEADDQSALIYLLLSQKEKWMNKVFIENSYYLHGFWAGLVDKYEEMMENHHPGLGDERWPFVTHFVGCKPCGSYGDYPVERCLRSMERAFNFADNQVLRLYGFAHKGLESPKIKRVRNQTTKPIDDKENLDVKAKISTTS</sequence>
<organism>
    <name type="scientific">Oryza sativa subsp. japonica</name>
    <name type="common">Rice</name>
    <dbReference type="NCBI Taxonomy" id="39947"/>
    <lineage>
        <taxon>Eukaryota</taxon>
        <taxon>Viridiplantae</taxon>
        <taxon>Streptophyta</taxon>
        <taxon>Embryophyta</taxon>
        <taxon>Tracheophyta</taxon>
        <taxon>Spermatophyta</taxon>
        <taxon>Magnoliopsida</taxon>
        <taxon>Liliopsida</taxon>
        <taxon>Poales</taxon>
        <taxon>Poaceae</taxon>
        <taxon>BOP clade</taxon>
        <taxon>Oryzoideae</taxon>
        <taxon>Oryzeae</taxon>
        <taxon>Oryzinae</taxon>
        <taxon>Oryza</taxon>
        <taxon>Oryza sativa</taxon>
    </lineage>
</organism>
<accession>Q6H765</accession>
<accession>A0A0P0VJV6</accession>
<protein>
    <recommendedName>
        <fullName evidence="7">Probable glycosyltransferase 2</fullName>
        <shortName evidence="6">OsGT2</shortName>
        <ecNumber evidence="7">2.4.-.-</ecNumber>
    </recommendedName>
</protein>
<evidence type="ECO:0000250" key="1">
    <source>
        <dbReference type="UniProtKB" id="Q10MQ0"/>
    </source>
</evidence>
<evidence type="ECO:0000255" key="2"/>
<evidence type="ECO:0000255" key="3">
    <source>
        <dbReference type="PROSITE-ProRule" id="PRU00498"/>
    </source>
</evidence>
<evidence type="ECO:0000256" key="4">
    <source>
        <dbReference type="SAM" id="MobiDB-lite"/>
    </source>
</evidence>
<evidence type="ECO:0000269" key="5">
    <source>
    </source>
</evidence>
<evidence type="ECO:0000303" key="6">
    <source>
    </source>
</evidence>
<evidence type="ECO:0000305" key="7"/>
<evidence type="ECO:0000312" key="8">
    <source>
        <dbReference type="EMBL" id="BAD25434.1"/>
    </source>
</evidence>
<evidence type="ECO:0000312" key="9">
    <source>
        <dbReference type="EMBL" id="BAF08928.1"/>
    </source>
</evidence>
<evidence type="ECO:0000312" key="10">
    <source>
        <dbReference type="EMBL" id="EEE57116.1"/>
    </source>
</evidence>
<gene>
    <name evidence="6" type="primary">GT2</name>
    <name evidence="9" type="ordered locus">Os02g0529600</name>
    <name evidence="7" type="ordered locus">LOC_Os02g32750</name>
    <name evidence="10" type="ORF">OsJ_06989</name>
    <name evidence="8" type="ORF">P0476H10.24</name>
</gene>
<proteinExistence type="evidence at transcript level"/>
<keyword id="KW-0325">Glycoprotein</keyword>
<keyword id="KW-0328">Glycosyltransferase</keyword>
<keyword id="KW-0333">Golgi apparatus</keyword>
<keyword id="KW-0472">Membrane</keyword>
<keyword id="KW-1185">Reference proteome</keyword>
<keyword id="KW-0735">Signal-anchor</keyword>
<keyword id="KW-0808">Transferase</keyword>
<keyword id="KW-0812">Transmembrane</keyword>
<keyword id="KW-1133">Transmembrane helix</keyword>
<comment type="function">
    <text evidence="1">Probable glycosyltransferase that may be involved in the biosynthesis of xyloglucan.</text>
</comment>
<comment type="subcellular location">
    <subcellularLocation>
        <location evidence="7">Golgi apparatus membrane</location>
        <topology evidence="7">Single-pass type II membrane protein</topology>
    </subcellularLocation>
</comment>
<comment type="induction">
    <text evidence="5">By treatment with atrazine.</text>
</comment>
<comment type="similarity">
    <text evidence="7">Belongs to the glycosyltransferase 34 family.</text>
</comment>
<name>GT2_ORYSJ</name>
<feature type="chain" id="PRO_0000434325" description="Probable glycosyltransferase 2">
    <location>
        <begin position="1"/>
        <end position="480"/>
    </location>
</feature>
<feature type="topological domain" description="Cytoplasmic" evidence="7">
    <location>
        <begin position="1"/>
        <end position="49"/>
    </location>
</feature>
<feature type="transmembrane region" description="Helical; Signal-anchor for type II membrane protein" evidence="2">
    <location>
        <begin position="50"/>
        <end position="72"/>
    </location>
</feature>
<feature type="topological domain" description="Lumenal" evidence="7">
    <location>
        <begin position="73"/>
        <end position="480"/>
    </location>
</feature>
<feature type="region of interest" description="Disordered" evidence="4">
    <location>
        <begin position="1"/>
        <end position="45"/>
    </location>
</feature>
<feature type="compositionally biased region" description="Gly residues" evidence="4">
    <location>
        <begin position="1"/>
        <end position="21"/>
    </location>
</feature>
<feature type="glycosylation site" description="N-linked (GlcNAc...) asparagine" evidence="3">
    <location>
        <position position="74"/>
    </location>
</feature>
<feature type="glycosylation site" description="N-linked (GlcNAc...) asparagine" evidence="3">
    <location>
        <position position="124"/>
    </location>
</feature>
<feature type="glycosylation site" description="N-linked (GlcNAc...) asparagine" evidence="3">
    <location>
        <position position="129"/>
    </location>
</feature>
<feature type="glycosylation site" description="N-linked (GlcNAc...) asparagine" evidence="3">
    <location>
        <position position="458"/>
    </location>
</feature>
<reference key="1">
    <citation type="journal article" date="2005" name="Nature">
        <title>The map-based sequence of the rice genome.</title>
        <authorList>
            <consortium name="International rice genome sequencing project (IRGSP)"/>
        </authorList>
    </citation>
    <scope>NUCLEOTIDE SEQUENCE [LARGE SCALE GENOMIC DNA]</scope>
    <source>
        <strain>cv. Nipponbare</strain>
    </source>
</reference>
<reference key="2">
    <citation type="journal article" date="2008" name="Nucleic Acids Res.">
        <title>The rice annotation project database (RAP-DB): 2008 update.</title>
        <authorList>
            <consortium name="The rice annotation project (RAP)"/>
        </authorList>
    </citation>
    <scope>GENOME REANNOTATION</scope>
    <source>
        <strain>cv. Nipponbare</strain>
    </source>
</reference>
<reference key="3">
    <citation type="journal article" date="2013" name="Rice">
        <title>Improvement of the Oryza sativa Nipponbare reference genome using next generation sequence and optical map data.</title>
        <authorList>
            <person name="Kawahara Y."/>
            <person name="de la Bastide M."/>
            <person name="Hamilton J.P."/>
            <person name="Kanamori H."/>
            <person name="McCombie W.R."/>
            <person name="Ouyang S."/>
            <person name="Schwartz D.C."/>
            <person name="Tanaka T."/>
            <person name="Wu J."/>
            <person name="Zhou S."/>
            <person name="Childs K.L."/>
            <person name="Davidson R.M."/>
            <person name="Lin H."/>
            <person name="Quesada-Ocampo L."/>
            <person name="Vaillancourt B."/>
            <person name="Sakai H."/>
            <person name="Lee S.S."/>
            <person name="Kim J."/>
            <person name="Numa H."/>
            <person name="Itoh T."/>
            <person name="Buell C.R."/>
            <person name="Matsumoto T."/>
        </authorList>
    </citation>
    <scope>GENOME REANNOTATION</scope>
    <source>
        <strain>cv. Nipponbare</strain>
    </source>
</reference>
<reference key="4">
    <citation type="journal article" date="2005" name="PLoS Biol.">
        <title>The genomes of Oryza sativa: a history of duplications.</title>
        <authorList>
            <person name="Yu J."/>
            <person name="Wang J."/>
            <person name="Lin W."/>
            <person name="Li S."/>
            <person name="Li H."/>
            <person name="Zhou J."/>
            <person name="Ni P."/>
            <person name="Dong W."/>
            <person name="Hu S."/>
            <person name="Zeng C."/>
            <person name="Zhang J."/>
            <person name="Zhang Y."/>
            <person name="Li R."/>
            <person name="Xu Z."/>
            <person name="Li S."/>
            <person name="Li X."/>
            <person name="Zheng H."/>
            <person name="Cong L."/>
            <person name="Lin L."/>
            <person name="Yin J."/>
            <person name="Geng J."/>
            <person name="Li G."/>
            <person name="Shi J."/>
            <person name="Liu J."/>
            <person name="Lv H."/>
            <person name="Li J."/>
            <person name="Wang J."/>
            <person name="Deng Y."/>
            <person name="Ran L."/>
            <person name="Shi X."/>
            <person name="Wang X."/>
            <person name="Wu Q."/>
            <person name="Li C."/>
            <person name="Ren X."/>
            <person name="Wang J."/>
            <person name="Wang X."/>
            <person name="Li D."/>
            <person name="Liu D."/>
            <person name="Zhang X."/>
            <person name="Ji Z."/>
            <person name="Zhao W."/>
            <person name="Sun Y."/>
            <person name="Zhang Z."/>
            <person name="Bao J."/>
            <person name="Han Y."/>
            <person name="Dong L."/>
            <person name="Ji J."/>
            <person name="Chen P."/>
            <person name="Wu S."/>
            <person name="Liu J."/>
            <person name="Xiao Y."/>
            <person name="Bu D."/>
            <person name="Tan J."/>
            <person name="Yang L."/>
            <person name="Ye C."/>
            <person name="Zhang J."/>
            <person name="Xu J."/>
            <person name="Zhou Y."/>
            <person name="Yu Y."/>
            <person name="Zhang B."/>
            <person name="Zhuang S."/>
            <person name="Wei H."/>
            <person name="Liu B."/>
            <person name="Lei M."/>
            <person name="Yu H."/>
            <person name="Li Y."/>
            <person name="Xu H."/>
            <person name="Wei S."/>
            <person name="He X."/>
            <person name="Fang L."/>
            <person name="Zhang Z."/>
            <person name="Zhang Y."/>
            <person name="Huang X."/>
            <person name="Su Z."/>
            <person name="Tong W."/>
            <person name="Li J."/>
            <person name="Tong Z."/>
            <person name="Li S."/>
            <person name="Ye J."/>
            <person name="Wang L."/>
            <person name="Fang L."/>
            <person name="Lei T."/>
            <person name="Chen C.-S."/>
            <person name="Chen H.-C."/>
            <person name="Xu Z."/>
            <person name="Li H."/>
            <person name="Huang H."/>
            <person name="Zhang F."/>
            <person name="Xu H."/>
            <person name="Li N."/>
            <person name="Zhao C."/>
            <person name="Li S."/>
            <person name="Dong L."/>
            <person name="Huang Y."/>
            <person name="Li L."/>
            <person name="Xi Y."/>
            <person name="Qi Q."/>
            <person name="Li W."/>
            <person name="Zhang B."/>
            <person name="Hu W."/>
            <person name="Zhang Y."/>
            <person name="Tian X."/>
            <person name="Jiao Y."/>
            <person name="Liang X."/>
            <person name="Jin J."/>
            <person name="Gao L."/>
            <person name="Zheng W."/>
            <person name="Hao B."/>
            <person name="Liu S.-M."/>
            <person name="Wang W."/>
            <person name="Yuan L."/>
            <person name="Cao M."/>
            <person name="McDermott J."/>
            <person name="Samudrala R."/>
            <person name="Wang J."/>
            <person name="Wong G.K.-S."/>
            <person name="Yang H."/>
        </authorList>
    </citation>
    <scope>NUCLEOTIDE SEQUENCE [LARGE SCALE GENOMIC DNA]</scope>
    <source>
        <strain>cv. Nipponbare</strain>
    </source>
</reference>
<reference key="5">
    <citation type="journal article" date="2003" name="Science">
        <title>Collection, mapping, and annotation of over 28,000 cDNA clones from japonica rice.</title>
        <authorList>
            <consortium name="The rice full-length cDNA consortium"/>
        </authorList>
    </citation>
    <scope>NUCLEOTIDE SEQUENCE [LARGE SCALE MRNA]</scope>
    <source>
        <strain>cv. Nipponbare</strain>
    </source>
</reference>
<reference key="6">
    <citation type="journal article" date="2013" name="Gene">
        <title>A collection of glycosyltransferases from rice (Oryza sativa) exposed to atrazine.</title>
        <authorList>
            <person name="Lu Y.C."/>
            <person name="Yang S.N."/>
            <person name="Zhang J.J."/>
            <person name="Zhang J.J."/>
            <person name="Tan L.R."/>
            <person name="Yang H."/>
        </authorList>
    </citation>
    <scope>INDUCTION BY ATRAZINE</scope>
</reference>
<reference key="7">
    <citation type="journal article" date="2014" name="J. Exp. Bot.">
        <title>Mutation in xyloglucan 6-xylosytransferase results in abnormal root hair development in Oryza sativa.</title>
        <authorList>
            <person name="Wang C."/>
            <person name="Li S."/>
            <person name="Ng S."/>
            <person name="Zhang B."/>
            <person name="Zhou Y."/>
            <person name="Whelan J."/>
            <person name="Wu P."/>
            <person name="Shou H."/>
        </authorList>
    </citation>
    <scope>NOMENCLATURE</scope>
</reference>
<dbReference type="EC" id="2.4.-.-" evidence="7"/>
<dbReference type="EMBL" id="AP004790">
    <property type="protein sequence ID" value="BAD25434.1"/>
    <property type="molecule type" value="Genomic_DNA"/>
</dbReference>
<dbReference type="EMBL" id="AP008208">
    <property type="protein sequence ID" value="BAF08928.1"/>
    <property type="molecule type" value="Genomic_DNA"/>
</dbReference>
<dbReference type="EMBL" id="AP014958">
    <property type="protein sequence ID" value="BAS79020.1"/>
    <property type="molecule type" value="Genomic_DNA"/>
</dbReference>
<dbReference type="EMBL" id="CM000139">
    <property type="protein sequence ID" value="EEE57116.1"/>
    <property type="molecule type" value="Genomic_DNA"/>
</dbReference>
<dbReference type="EMBL" id="AK100984">
    <property type="protein sequence ID" value="BAG94866.1"/>
    <property type="molecule type" value="mRNA"/>
</dbReference>
<dbReference type="RefSeq" id="XP_015627055.1">
    <property type="nucleotide sequence ID" value="XM_015771569.1"/>
</dbReference>
<dbReference type="RefSeq" id="XP_015627056.1">
    <property type="nucleotide sequence ID" value="XM_015771570.1"/>
</dbReference>
<dbReference type="SMR" id="Q6H765"/>
<dbReference type="FunCoup" id="Q6H765">
    <property type="interactions" value="474"/>
</dbReference>
<dbReference type="STRING" id="39947.Q6H765"/>
<dbReference type="CAZy" id="GT34">
    <property type="family name" value="Glycosyltransferase Family 34"/>
</dbReference>
<dbReference type="GlyCosmos" id="Q6H765">
    <property type="glycosylation" value="4 sites, No reported glycans"/>
</dbReference>
<dbReference type="PaxDb" id="39947-Q6H765"/>
<dbReference type="EnsemblPlants" id="Os02t0529600-01">
    <property type="protein sequence ID" value="Os02t0529600-01"/>
    <property type="gene ID" value="Os02g0529600"/>
</dbReference>
<dbReference type="Gramene" id="Os02t0529600-01">
    <property type="protein sequence ID" value="Os02t0529600-01"/>
    <property type="gene ID" value="Os02g0529600"/>
</dbReference>
<dbReference type="KEGG" id="dosa:Os02g0529600"/>
<dbReference type="eggNOG" id="KOG4748">
    <property type="taxonomic scope" value="Eukaryota"/>
</dbReference>
<dbReference type="HOGENOM" id="CLU_034328_1_0_1"/>
<dbReference type="InParanoid" id="Q6H765"/>
<dbReference type="OMA" id="ARYEKHN"/>
<dbReference type="OrthoDB" id="205108at2759"/>
<dbReference type="PlantReactome" id="R-OSA-5655101">
    <property type="pathway name" value="Xyloglucan biosynthesis"/>
</dbReference>
<dbReference type="Proteomes" id="UP000000763">
    <property type="component" value="Chromosome 2"/>
</dbReference>
<dbReference type="Proteomes" id="UP000007752">
    <property type="component" value="Chromosome 2"/>
</dbReference>
<dbReference type="Proteomes" id="UP000059680">
    <property type="component" value="Chromosome 2"/>
</dbReference>
<dbReference type="GO" id="GO:0000139">
    <property type="term" value="C:Golgi membrane"/>
    <property type="evidence" value="ECO:0007669"/>
    <property type="project" value="UniProtKB-SubCell"/>
</dbReference>
<dbReference type="GO" id="GO:0016758">
    <property type="term" value="F:hexosyltransferase activity"/>
    <property type="evidence" value="ECO:0000318"/>
    <property type="project" value="GO_Central"/>
</dbReference>
<dbReference type="GO" id="GO:0009969">
    <property type="term" value="P:xyloglucan biosynthetic process"/>
    <property type="evidence" value="ECO:0000318"/>
    <property type="project" value="GO_Central"/>
</dbReference>
<dbReference type="FunFam" id="3.90.550.10:FF:000032">
    <property type="entry name" value="xyloglucan 6-xylosyltransferase 2"/>
    <property type="match status" value="1"/>
</dbReference>
<dbReference type="Gene3D" id="3.90.550.10">
    <property type="entry name" value="Spore Coat Polysaccharide Biosynthesis Protein SpsA, Chain A"/>
    <property type="match status" value="1"/>
</dbReference>
<dbReference type="InterPro" id="IPR008630">
    <property type="entry name" value="Glyco_trans_34"/>
</dbReference>
<dbReference type="InterPro" id="IPR029044">
    <property type="entry name" value="Nucleotide-diphossugar_trans"/>
</dbReference>
<dbReference type="PANTHER" id="PTHR31311:SF44">
    <property type="entry name" value="GLYCOSYLTRANSFERASE 2-RELATED"/>
    <property type="match status" value="1"/>
</dbReference>
<dbReference type="PANTHER" id="PTHR31311">
    <property type="entry name" value="XYLOGLUCAN 6-XYLOSYLTRANSFERASE 5-RELATED-RELATED"/>
    <property type="match status" value="1"/>
</dbReference>
<dbReference type="Pfam" id="PF05637">
    <property type="entry name" value="Glyco_transf_34"/>
    <property type="match status" value="1"/>
</dbReference>